<protein>
    <recommendedName>
        <fullName>Cold shock-like protein CspB</fullName>
    </recommendedName>
</protein>
<feature type="chain" id="PRO_0000100284" description="Cold shock-like protein CspB">
    <location>
        <begin position="1"/>
        <end position="65"/>
    </location>
</feature>
<feature type="domain" description="CSD">
    <location>
        <begin position="3"/>
        <end position="62"/>
    </location>
</feature>
<accession>Q45097</accession>
<reference key="1">
    <citation type="journal article" date="1996" name="J. Bacteriol.">
        <title>Identification and purification of a family of dimeric major cold shock protein homologs from the psychrotrophic Bacillus cereus WSBC 10201.</title>
        <authorList>
            <person name="Mayr B."/>
            <person name="Kaplan T."/>
            <person name="Lechner S."/>
            <person name="Scherer S."/>
        </authorList>
    </citation>
    <scope>NUCLEOTIDE SEQUENCE [GENOMIC DNA]</scope>
    <source>
        <strain>WSBC 10201</strain>
    </source>
</reference>
<keyword id="KW-0010">Activator</keyword>
<keyword id="KW-0963">Cytoplasm</keyword>
<keyword id="KW-0238">DNA-binding</keyword>
<keyword id="KW-0804">Transcription</keyword>
<keyword id="KW-0805">Transcription regulation</keyword>
<organism>
    <name type="scientific">Bacillus cereus</name>
    <dbReference type="NCBI Taxonomy" id="1396"/>
    <lineage>
        <taxon>Bacteria</taxon>
        <taxon>Bacillati</taxon>
        <taxon>Bacillota</taxon>
        <taxon>Bacilli</taxon>
        <taxon>Bacillales</taxon>
        <taxon>Bacillaceae</taxon>
        <taxon>Bacillus</taxon>
        <taxon>Bacillus cereus group</taxon>
    </lineage>
</organism>
<name>CSPB_BACCE</name>
<dbReference type="EMBL" id="X93040">
    <property type="protein sequence ID" value="CAA63608.1"/>
    <property type="molecule type" value="Genomic_DNA"/>
</dbReference>
<dbReference type="SMR" id="Q45097"/>
<dbReference type="GO" id="GO:0005737">
    <property type="term" value="C:cytoplasm"/>
    <property type="evidence" value="ECO:0007669"/>
    <property type="project" value="UniProtKB-SubCell"/>
</dbReference>
<dbReference type="GO" id="GO:0003677">
    <property type="term" value="F:DNA binding"/>
    <property type="evidence" value="ECO:0007669"/>
    <property type="project" value="UniProtKB-KW"/>
</dbReference>
<dbReference type="CDD" id="cd04458">
    <property type="entry name" value="CSP_CDS"/>
    <property type="match status" value="1"/>
</dbReference>
<dbReference type="FunFam" id="2.40.50.140:FF:000006">
    <property type="entry name" value="Cold shock protein CspC"/>
    <property type="match status" value="1"/>
</dbReference>
<dbReference type="Gene3D" id="6.20.370.130">
    <property type="match status" value="1"/>
</dbReference>
<dbReference type="Gene3D" id="2.40.50.140">
    <property type="entry name" value="Nucleic acid-binding proteins"/>
    <property type="match status" value="1"/>
</dbReference>
<dbReference type="InterPro" id="IPR012156">
    <property type="entry name" value="Cold_shock_CspA"/>
</dbReference>
<dbReference type="InterPro" id="IPR050181">
    <property type="entry name" value="Cold_shock_domain"/>
</dbReference>
<dbReference type="InterPro" id="IPR011129">
    <property type="entry name" value="CSD"/>
</dbReference>
<dbReference type="InterPro" id="IPR019844">
    <property type="entry name" value="CSD_CS"/>
</dbReference>
<dbReference type="InterPro" id="IPR002059">
    <property type="entry name" value="CSP_DNA-bd"/>
</dbReference>
<dbReference type="InterPro" id="IPR012340">
    <property type="entry name" value="NA-bd_OB-fold"/>
</dbReference>
<dbReference type="PANTHER" id="PTHR11544">
    <property type="entry name" value="COLD SHOCK DOMAIN CONTAINING PROTEINS"/>
    <property type="match status" value="1"/>
</dbReference>
<dbReference type="Pfam" id="PF00313">
    <property type="entry name" value="CSD"/>
    <property type="match status" value="1"/>
</dbReference>
<dbReference type="PIRSF" id="PIRSF002599">
    <property type="entry name" value="Cold_shock_A"/>
    <property type="match status" value="1"/>
</dbReference>
<dbReference type="PRINTS" id="PR00050">
    <property type="entry name" value="COLDSHOCK"/>
</dbReference>
<dbReference type="SMART" id="SM00357">
    <property type="entry name" value="CSP"/>
    <property type="match status" value="1"/>
</dbReference>
<dbReference type="SUPFAM" id="SSF50249">
    <property type="entry name" value="Nucleic acid-binding proteins"/>
    <property type="match status" value="1"/>
</dbReference>
<dbReference type="PROSITE" id="PS00352">
    <property type="entry name" value="CSD_1"/>
    <property type="match status" value="1"/>
</dbReference>
<dbReference type="PROSITE" id="PS51857">
    <property type="entry name" value="CSD_2"/>
    <property type="match status" value="1"/>
</dbReference>
<evidence type="ECO:0000305" key="1"/>
<sequence length="65" mass="7200">MNGKVKWFNNEKGFGFIEMEGSEDVFVHFSAIQSDGYKALEEGQEVSFDITEGNRGPQAANVAKL</sequence>
<proteinExistence type="predicted"/>
<gene>
    <name type="primary">cspB</name>
</gene>
<comment type="subunit">
    <text evidence="1">Homodimer.</text>
</comment>
<comment type="subcellular location">
    <subcellularLocation>
        <location>Cytoplasm</location>
    </subcellularLocation>
</comment>